<comment type="function">
    <text evidence="1">Induces apoptosis.</text>
</comment>
<comment type="subunit">
    <text evidence="1">Interacts with HARBI1.</text>
</comment>
<comment type="subcellular location">
    <subcellularLocation>
        <location evidence="1">Nucleus</location>
    </subcellularLocation>
</comment>
<comment type="similarity">
    <text evidence="3">Belongs to the NAIF1 family.</text>
</comment>
<organism>
    <name type="scientific">Mus musculus</name>
    <name type="common">Mouse</name>
    <dbReference type="NCBI Taxonomy" id="10090"/>
    <lineage>
        <taxon>Eukaryota</taxon>
        <taxon>Metazoa</taxon>
        <taxon>Chordata</taxon>
        <taxon>Craniata</taxon>
        <taxon>Vertebrata</taxon>
        <taxon>Euteleostomi</taxon>
        <taxon>Mammalia</taxon>
        <taxon>Eutheria</taxon>
        <taxon>Euarchontoglires</taxon>
        <taxon>Glires</taxon>
        <taxon>Rodentia</taxon>
        <taxon>Myomorpha</taxon>
        <taxon>Muroidea</taxon>
        <taxon>Muridae</taxon>
        <taxon>Murinae</taxon>
        <taxon>Mus</taxon>
        <taxon>Mus</taxon>
    </lineage>
</organism>
<sequence>MAVPAKKRKMNFSEREVEIIVEELELKKHLLVNHFNAGVPLAAKSAAWHGILRRVNAVATCRRELPEVKKKWSDLKTEVRRKVAQVRAAVEGGEAPGPTEDDGAGGPGTGSGSGGSGTAIAPVLLTPMQQRICNLLGEATIISLPSTTEIHPVALGSTATTAAATVTLTQIPTETTYHTLEEGVVEYCTAEAPPPLPTEAPVEMIAQPPDTSVKPQALKSRIALNSAKLIQEQRVTNLHIKEIAQHLEQQNGLLQMIRRSQEVQACAQERQAQAMEGTQAALSVLIQVLRPMIKDFRRYLQNNTPNPAPASAPGPVAQNGQPDSIIQ</sequence>
<accession>Q6PFD7</accession>
<accession>A2ASZ4</accession>
<accession>Q8CEZ2</accession>
<protein>
    <recommendedName>
        <fullName>Nuclear apoptosis-inducing factor 1</fullName>
    </recommendedName>
</protein>
<keyword id="KW-0053">Apoptosis</keyword>
<keyword id="KW-0539">Nucleus</keyword>
<keyword id="KW-1185">Reference proteome</keyword>
<gene>
    <name type="primary">Naif1</name>
</gene>
<dbReference type="EMBL" id="AL928710">
    <property type="status" value="NOT_ANNOTATED_CDS"/>
    <property type="molecule type" value="Genomic_DNA"/>
</dbReference>
<dbReference type="EMBL" id="BC057613">
    <property type="protein sequence ID" value="AAH57613.1"/>
    <property type="molecule type" value="mRNA"/>
</dbReference>
<dbReference type="EMBL" id="AK009216">
    <property type="protein sequence ID" value="BAC25247.1"/>
    <property type="molecule type" value="mRNA"/>
</dbReference>
<dbReference type="CCDS" id="CCDS15916.1"/>
<dbReference type="RefSeq" id="NP_919316.1">
    <property type="nucleotide sequence ID" value="NM_194335.3"/>
</dbReference>
<dbReference type="SMR" id="Q6PFD7"/>
<dbReference type="FunCoup" id="Q6PFD7">
    <property type="interactions" value="2643"/>
</dbReference>
<dbReference type="STRING" id="10090.ENSMUSP00000048764"/>
<dbReference type="GlyGen" id="Q6PFD7">
    <property type="glycosylation" value="1 site"/>
</dbReference>
<dbReference type="iPTMnet" id="Q6PFD7"/>
<dbReference type="PhosphoSitePlus" id="Q6PFD7"/>
<dbReference type="PaxDb" id="10090-ENSMUSP00000048764"/>
<dbReference type="PeptideAtlas" id="Q6PFD7"/>
<dbReference type="ProteomicsDB" id="293616"/>
<dbReference type="Antibodypedia" id="30951">
    <property type="antibodies" value="106 antibodies from 18 providers"/>
</dbReference>
<dbReference type="DNASU" id="71254"/>
<dbReference type="Ensembl" id="ENSMUST00000048431.3">
    <property type="protein sequence ID" value="ENSMUSP00000048764.3"/>
    <property type="gene ID" value="ENSMUSG00000039164.3"/>
</dbReference>
<dbReference type="GeneID" id="71254"/>
<dbReference type="KEGG" id="mmu:71254"/>
<dbReference type="UCSC" id="uc008jfr.1">
    <property type="organism name" value="mouse"/>
</dbReference>
<dbReference type="AGR" id="MGI:1918504"/>
<dbReference type="CTD" id="203245"/>
<dbReference type="MGI" id="MGI:1918504">
    <property type="gene designation" value="Naif1"/>
</dbReference>
<dbReference type="VEuPathDB" id="HostDB:ENSMUSG00000039164"/>
<dbReference type="eggNOG" id="ENOG502QW9U">
    <property type="taxonomic scope" value="Eukaryota"/>
</dbReference>
<dbReference type="GeneTree" id="ENSGT00450000040324"/>
<dbReference type="HOGENOM" id="CLU_078961_0_0_1"/>
<dbReference type="InParanoid" id="Q6PFD7"/>
<dbReference type="OMA" id="QQDGMIQ"/>
<dbReference type="OrthoDB" id="9039237at2759"/>
<dbReference type="PhylomeDB" id="Q6PFD7"/>
<dbReference type="TreeFam" id="TF332812"/>
<dbReference type="BioGRID-ORCS" id="71254">
    <property type="hits" value="4 hits in 76 CRISPR screens"/>
</dbReference>
<dbReference type="PRO" id="PR:Q6PFD7"/>
<dbReference type="Proteomes" id="UP000000589">
    <property type="component" value="Chromosome 2"/>
</dbReference>
<dbReference type="RNAct" id="Q6PFD7">
    <property type="molecule type" value="protein"/>
</dbReference>
<dbReference type="Bgee" id="ENSMUSG00000039164">
    <property type="expression patterns" value="Expressed in spermatid and 157 other cell types or tissues"/>
</dbReference>
<dbReference type="GO" id="GO:0005829">
    <property type="term" value="C:cytosol"/>
    <property type="evidence" value="ECO:0007669"/>
    <property type="project" value="Ensembl"/>
</dbReference>
<dbReference type="GO" id="GO:0005739">
    <property type="term" value="C:mitochondrion"/>
    <property type="evidence" value="ECO:0007669"/>
    <property type="project" value="GOC"/>
</dbReference>
<dbReference type="GO" id="GO:0005654">
    <property type="term" value="C:nucleoplasm"/>
    <property type="evidence" value="ECO:0007669"/>
    <property type="project" value="Ensembl"/>
</dbReference>
<dbReference type="GO" id="GO:0005634">
    <property type="term" value="C:nucleus"/>
    <property type="evidence" value="ECO:0000250"/>
    <property type="project" value="UniProtKB"/>
</dbReference>
<dbReference type="GO" id="GO:0005886">
    <property type="term" value="C:plasma membrane"/>
    <property type="evidence" value="ECO:0007669"/>
    <property type="project" value="Ensembl"/>
</dbReference>
<dbReference type="GO" id="GO:0030308">
    <property type="term" value="P:negative regulation of cell growth"/>
    <property type="evidence" value="ECO:0007669"/>
    <property type="project" value="Ensembl"/>
</dbReference>
<dbReference type="GO" id="GO:1902108">
    <property type="term" value="P:regulation of mitochondrial membrane permeability involved in apoptotic process"/>
    <property type="evidence" value="ECO:0000250"/>
    <property type="project" value="UniProtKB"/>
</dbReference>
<dbReference type="InterPro" id="IPR028002">
    <property type="entry name" value="Myb_DNA-bind_5"/>
</dbReference>
<dbReference type="PANTHER" id="PTHR23098">
    <property type="entry name" value="AGAP001331-PA-RELATED"/>
    <property type="match status" value="1"/>
</dbReference>
<dbReference type="PANTHER" id="PTHR23098:SF7">
    <property type="entry name" value="NUCLEAR APOPTOSIS-INDUCING FACTOR 1"/>
    <property type="match status" value="1"/>
</dbReference>
<dbReference type="Pfam" id="PF13873">
    <property type="entry name" value="Myb_DNA-bind_5"/>
    <property type="match status" value="1"/>
</dbReference>
<evidence type="ECO:0000250" key="1"/>
<evidence type="ECO:0000256" key="2">
    <source>
        <dbReference type="SAM" id="MobiDB-lite"/>
    </source>
</evidence>
<evidence type="ECO:0000305" key="3"/>
<proteinExistence type="evidence at transcript level"/>
<feature type="chain" id="PRO_0000089726" description="Nuclear apoptosis-inducing factor 1">
    <location>
        <begin position="1"/>
        <end position="327"/>
    </location>
</feature>
<feature type="region of interest" description="Required for nuclear localization and apoptosis-inducing activity" evidence="1">
    <location>
        <begin position="1"/>
        <end position="70"/>
    </location>
</feature>
<feature type="region of interest" description="Disordered" evidence="2">
    <location>
        <begin position="87"/>
        <end position="118"/>
    </location>
</feature>
<feature type="region of interest" description="Disordered" evidence="2">
    <location>
        <begin position="301"/>
        <end position="327"/>
    </location>
</feature>
<feature type="compositionally biased region" description="Gly residues" evidence="2">
    <location>
        <begin position="104"/>
        <end position="117"/>
    </location>
</feature>
<feature type="compositionally biased region" description="Polar residues" evidence="2">
    <location>
        <begin position="318"/>
        <end position="327"/>
    </location>
</feature>
<reference key="1">
    <citation type="journal article" date="2009" name="PLoS Biol.">
        <title>Lineage-specific biology revealed by a finished genome assembly of the mouse.</title>
        <authorList>
            <person name="Church D.M."/>
            <person name="Goodstadt L."/>
            <person name="Hillier L.W."/>
            <person name="Zody M.C."/>
            <person name="Goldstein S."/>
            <person name="She X."/>
            <person name="Bult C.J."/>
            <person name="Agarwala R."/>
            <person name="Cherry J.L."/>
            <person name="DiCuccio M."/>
            <person name="Hlavina W."/>
            <person name="Kapustin Y."/>
            <person name="Meric P."/>
            <person name="Maglott D."/>
            <person name="Birtle Z."/>
            <person name="Marques A.C."/>
            <person name="Graves T."/>
            <person name="Zhou S."/>
            <person name="Teague B."/>
            <person name="Potamousis K."/>
            <person name="Churas C."/>
            <person name="Place M."/>
            <person name="Herschleb J."/>
            <person name="Runnheim R."/>
            <person name="Forrest D."/>
            <person name="Amos-Landgraf J."/>
            <person name="Schwartz D.C."/>
            <person name="Cheng Z."/>
            <person name="Lindblad-Toh K."/>
            <person name="Eichler E.E."/>
            <person name="Ponting C.P."/>
        </authorList>
    </citation>
    <scope>NUCLEOTIDE SEQUENCE [LARGE SCALE GENOMIC DNA]</scope>
    <source>
        <strain>C57BL/6J</strain>
    </source>
</reference>
<reference key="2">
    <citation type="journal article" date="2004" name="Genome Res.">
        <title>The status, quality, and expansion of the NIH full-length cDNA project: the Mammalian Gene Collection (MGC).</title>
        <authorList>
            <consortium name="The MGC Project Team"/>
        </authorList>
    </citation>
    <scope>NUCLEOTIDE SEQUENCE [LARGE SCALE MRNA]</scope>
    <source>
        <strain>C57BL/6J</strain>
        <tissue>Brain</tissue>
    </source>
</reference>
<reference key="3">
    <citation type="journal article" date="2005" name="Science">
        <title>The transcriptional landscape of the mammalian genome.</title>
        <authorList>
            <person name="Carninci P."/>
            <person name="Kasukawa T."/>
            <person name="Katayama S."/>
            <person name="Gough J."/>
            <person name="Frith M.C."/>
            <person name="Maeda N."/>
            <person name="Oyama R."/>
            <person name="Ravasi T."/>
            <person name="Lenhard B."/>
            <person name="Wells C."/>
            <person name="Kodzius R."/>
            <person name="Shimokawa K."/>
            <person name="Bajic V.B."/>
            <person name="Brenner S.E."/>
            <person name="Batalov S."/>
            <person name="Forrest A.R."/>
            <person name="Zavolan M."/>
            <person name="Davis M.J."/>
            <person name="Wilming L.G."/>
            <person name="Aidinis V."/>
            <person name="Allen J.E."/>
            <person name="Ambesi-Impiombato A."/>
            <person name="Apweiler R."/>
            <person name="Aturaliya R.N."/>
            <person name="Bailey T.L."/>
            <person name="Bansal M."/>
            <person name="Baxter L."/>
            <person name="Beisel K.W."/>
            <person name="Bersano T."/>
            <person name="Bono H."/>
            <person name="Chalk A.M."/>
            <person name="Chiu K.P."/>
            <person name="Choudhary V."/>
            <person name="Christoffels A."/>
            <person name="Clutterbuck D.R."/>
            <person name="Crowe M.L."/>
            <person name="Dalla E."/>
            <person name="Dalrymple B.P."/>
            <person name="de Bono B."/>
            <person name="Della Gatta G."/>
            <person name="di Bernardo D."/>
            <person name="Down T."/>
            <person name="Engstrom P."/>
            <person name="Fagiolini M."/>
            <person name="Faulkner G."/>
            <person name="Fletcher C.F."/>
            <person name="Fukushima T."/>
            <person name="Furuno M."/>
            <person name="Futaki S."/>
            <person name="Gariboldi M."/>
            <person name="Georgii-Hemming P."/>
            <person name="Gingeras T.R."/>
            <person name="Gojobori T."/>
            <person name="Green R.E."/>
            <person name="Gustincich S."/>
            <person name="Harbers M."/>
            <person name="Hayashi Y."/>
            <person name="Hensch T.K."/>
            <person name="Hirokawa N."/>
            <person name="Hill D."/>
            <person name="Huminiecki L."/>
            <person name="Iacono M."/>
            <person name="Ikeo K."/>
            <person name="Iwama A."/>
            <person name="Ishikawa T."/>
            <person name="Jakt M."/>
            <person name="Kanapin A."/>
            <person name="Katoh M."/>
            <person name="Kawasawa Y."/>
            <person name="Kelso J."/>
            <person name="Kitamura H."/>
            <person name="Kitano H."/>
            <person name="Kollias G."/>
            <person name="Krishnan S.P."/>
            <person name="Kruger A."/>
            <person name="Kummerfeld S.K."/>
            <person name="Kurochkin I.V."/>
            <person name="Lareau L.F."/>
            <person name="Lazarevic D."/>
            <person name="Lipovich L."/>
            <person name="Liu J."/>
            <person name="Liuni S."/>
            <person name="McWilliam S."/>
            <person name="Madan Babu M."/>
            <person name="Madera M."/>
            <person name="Marchionni L."/>
            <person name="Matsuda H."/>
            <person name="Matsuzawa S."/>
            <person name="Miki H."/>
            <person name="Mignone F."/>
            <person name="Miyake S."/>
            <person name="Morris K."/>
            <person name="Mottagui-Tabar S."/>
            <person name="Mulder N."/>
            <person name="Nakano N."/>
            <person name="Nakauchi H."/>
            <person name="Ng P."/>
            <person name="Nilsson R."/>
            <person name="Nishiguchi S."/>
            <person name="Nishikawa S."/>
            <person name="Nori F."/>
            <person name="Ohara O."/>
            <person name="Okazaki Y."/>
            <person name="Orlando V."/>
            <person name="Pang K.C."/>
            <person name="Pavan W.J."/>
            <person name="Pavesi G."/>
            <person name="Pesole G."/>
            <person name="Petrovsky N."/>
            <person name="Piazza S."/>
            <person name="Reed J."/>
            <person name="Reid J.F."/>
            <person name="Ring B.Z."/>
            <person name="Ringwald M."/>
            <person name="Rost B."/>
            <person name="Ruan Y."/>
            <person name="Salzberg S.L."/>
            <person name="Sandelin A."/>
            <person name="Schneider C."/>
            <person name="Schoenbach C."/>
            <person name="Sekiguchi K."/>
            <person name="Semple C.A."/>
            <person name="Seno S."/>
            <person name="Sessa L."/>
            <person name="Sheng Y."/>
            <person name="Shibata Y."/>
            <person name="Shimada H."/>
            <person name="Shimada K."/>
            <person name="Silva D."/>
            <person name="Sinclair B."/>
            <person name="Sperling S."/>
            <person name="Stupka E."/>
            <person name="Sugiura K."/>
            <person name="Sultana R."/>
            <person name="Takenaka Y."/>
            <person name="Taki K."/>
            <person name="Tammoja K."/>
            <person name="Tan S.L."/>
            <person name="Tang S."/>
            <person name="Taylor M.S."/>
            <person name="Tegner J."/>
            <person name="Teichmann S.A."/>
            <person name="Ueda H.R."/>
            <person name="van Nimwegen E."/>
            <person name="Verardo R."/>
            <person name="Wei C.L."/>
            <person name="Yagi K."/>
            <person name="Yamanishi H."/>
            <person name="Zabarovsky E."/>
            <person name="Zhu S."/>
            <person name="Zimmer A."/>
            <person name="Hide W."/>
            <person name="Bult C."/>
            <person name="Grimmond S.M."/>
            <person name="Teasdale R.D."/>
            <person name="Liu E.T."/>
            <person name="Brusic V."/>
            <person name="Quackenbush J."/>
            <person name="Wahlestedt C."/>
            <person name="Mattick J.S."/>
            <person name="Hume D.A."/>
            <person name="Kai C."/>
            <person name="Sasaki D."/>
            <person name="Tomaru Y."/>
            <person name="Fukuda S."/>
            <person name="Kanamori-Katayama M."/>
            <person name="Suzuki M."/>
            <person name="Aoki J."/>
            <person name="Arakawa T."/>
            <person name="Iida J."/>
            <person name="Imamura K."/>
            <person name="Itoh M."/>
            <person name="Kato T."/>
            <person name="Kawaji H."/>
            <person name="Kawagashira N."/>
            <person name="Kawashima T."/>
            <person name="Kojima M."/>
            <person name="Kondo S."/>
            <person name="Konno H."/>
            <person name="Nakano K."/>
            <person name="Ninomiya N."/>
            <person name="Nishio T."/>
            <person name="Okada M."/>
            <person name="Plessy C."/>
            <person name="Shibata K."/>
            <person name="Shiraki T."/>
            <person name="Suzuki S."/>
            <person name="Tagami M."/>
            <person name="Waki K."/>
            <person name="Watahiki A."/>
            <person name="Okamura-Oho Y."/>
            <person name="Suzuki H."/>
            <person name="Kawai J."/>
            <person name="Hayashizaki Y."/>
        </authorList>
    </citation>
    <scope>NUCLEOTIDE SEQUENCE [LARGE SCALE MRNA] OF 262-327</scope>
    <source>
        <strain>C57BL/6J</strain>
        <tissue>Tongue</tissue>
    </source>
</reference>
<name>NAIF1_MOUSE</name>